<dbReference type="EMBL" id="FM954972">
    <property type="protein sequence ID" value="CAV17216.1"/>
    <property type="molecule type" value="Genomic_DNA"/>
</dbReference>
<dbReference type="SMR" id="B7VHK4"/>
<dbReference type="STRING" id="575788.VS_0184"/>
<dbReference type="KEGG" id="vsp:VS_0184"/>
<dbReference type="eggNOG" id="COG0267">
    <property type="taxonomic scope" value="Bacteria"/>
</dbReference>
<dbReference type="HOGENOM" id="CLU_190949_1_1_6"/>
<dbReference type="Proteomes" id="UP000009100">
    <property type="component" value="Chromosome 1"/>
</dbReference>
<dbReference type="GO" id="GO:0022625">
    <property type="term" value="C:cytosolic large ribosomal subunit"/>
    <property type="evidence" value="ECO:0007669"/>
    <property type="project" value="TreeGrafter"/>
</dbReference>
<dbReference type="GO" id="GO:0003735">
    <property type="term" value="F:structural constituent of ribosome"/>
    <property type="evidence" value="ECO:0007669"/>
    <property type="project" value="InterPro"/>
</dbReference>
<dbReference type="GO" id="GO:0006412">
    <property type="term" value="P:translation"/>
    <property type="evidence" value="ECO:0007669"/>
    <property type="project" value="UniProtKB-UniRule"/>
</dbReference>
<dbReference type="FunFam" id="2.20.28.120:FF:000001">
    <property type="entry name" value="50S ribosomal protein L33"/>
    <property type="match status" value="1"/>
</dbReference>
<dbReference type="Gene3D" id="2.20.28.120">
    <property type="entry name" value="Ribosomal protein L33"/>
    <property type="match status" value="1"/>
</dbReference>
<dbReference type="HAMAP" id="MF_00294">
    <property type="entry name" value="Ribosomal_bL33"/>
    <property type="match status" value="1"/>
</dbReference>
<dbReference type="InterPro" id="IPR001705">
    <property type="entry name" value="Ribosomal_bL33"/>
</dbReference>
<dbReference type="InterPro" id="IPR018264">
    <property type="entry name" value="Ribosomal_bL33_CS"/>
</dbReference>
<dbReference type="InterPro" id="IPR038584">
    <property type="entry name" value="Ribosomal_bL33_sf"/>
</dbReference>
<dbReference type="InterPro" id="IPR011332">
    <property type="entry name" value="Ribosomal_zn-bd"/>
</dbReference>
<dbReference type="NCBIfam" id="NF001860">
    <property type="entry name" value="PRK00595.1"/>
    <property type="match status" value="1"/>
</dbReference>
<dbReference type="NCBIfam" id="TIGR01023">
    <property type="entry name" value="rpmG_bact"/>
    <property type="match status" value="1"/>
</dbReference>
<dbReference type="PANTHER" id="PTHR15238">
    <property type="entry name" value="54S RIBOSOMAL PROTEIN L39, MITOCHONDRIAL"/>
    <property type="match status" value="1"/>
</dbReference>
<dbReference type="PANTHER" id="PTHR15238:SF1">
    <property type="entry name" value="LARGE RIBOSOMAL SUBUNIT PROTEIN BL33M"/>
    <property type="match status" value="1"/>
</dbReference>
<dbReference type="Pfam" id="PF00471">
    <property type="entry name" value="Ribosomal_L33"/>
    <property type="match status" value="1"/>
</dbReference>
<dbReference type="SUPFAM" id="SSF57829">
    <property type="entry name" value="Zn-binding ribosomal proteins"/>
    <property type="match status" value="1"/>
</dbReference>
<dbReference type="PROSITE" id="PS00582">
    <property type="entry name" value="RIBOSOMAL_L33"/>
    <property type="match status" value="1"/>
</dbReference>
<comment type="similarity">
    <text evidence="1">Belongs to the bacterial ribosomal protein bL33 family.</text>
</comment>
<feature type="chain" id="PRO_1000194065" description="Large ribosomal subunit protein bL33">
    <location>
        <begin position="1"/>
        <end position="55"/>
    </location>
</feature>
<protein>
    <recommendedName>
        <fullName evidence="1">Large ribosomal subunit protein bL33</fullName>
    </recommendedName>
    <alternativeName>
        <fullName evidence="2">50S ribosomal protein L33</fullName>
    </alternativeName>
</protein>
<sequence length="55" mass="6410">MAKGIREKIRLVSSAGTGHFYTTDKNKRNMPGKFEIKKFDPVVRQHVMYKEAKIK</sequence>
<proteinExistence type="inferred from homology"/>
<organism>
    <name type="scientific">Vibrio atlanticus (strain LGP32)</name>
    <name type="common">Vibrio splendidus (strain Mel32)</name>
    <dbReference type="NCBI Taxonomy" id="575788"/>
    <lineage>
        <taxon>Bacteria</taxon>
        <taxon>Pseudomonadati</taxon>
        <taxon>Pseudomonadota</taxon>
        <taxon>Gammaproteobacteria</taxon>
        <taxon>Vibrionales</taxon>
        <taxon>Vibrionaceae</taxon>
        <taxon>Vibrio</taxon>
    </lineage>
</organism>
<keyword id="KW-0687">Ribonucleoprotein</keyword>
<keyword id="KW-0689">Ribosomal protein</keyword>
<evidence type="ECO:0000255" key="1">
    <source>
        <dbReference type="HAMAP-Rule" id="MF_00294"/>
    </source>
</evidence>
<evidence type="ECO:0000305" key="2"/>
<accession>B7VHK4</accession>
<gene>
    <name evidence="1" type="primary">rpmG</name>
    <name type="ordered locus">VS_0184</name>
</gene>
<reference key="1">
    <citation type="submission" date="2009-02" db="EMBL/GenBank/DDBJ databases">
        <title>Vibrio splendidus str. LGP32 complete genome.</title>
        <authorList>
            <person name="Mazel D."/>
            <person name="Le Roux F."/>
        </authorList>
    </citation>
    <scope>NUCLEOTIDE SEQUENCE [LARGE SCALE GENOMIC DNA]</scope>
    <source>
        <strain>LGP32</strain>
    </source>
</reference>
<name>RL33_VIBA3</name>